<feature type="chain" id="PRO_1000052097" description="Large ribosomal subunit protein uL3">
    <location>
        <begin position="1"/>
        <end position="241"/>
    </location>
</feature>
<feature type="region of interest" description="Disordered" evidence="2">
    <location>
        <begin position="139"/>
        <end position="166"/>
    </location>
</feature>
<feature type="region of interest" description="Disordered" evidence="2">
    <location>
        <begin position="209"/>
        <end position="241"/>
    </location>
</feature>
<feature type="modified residue" description="N5-methylglutamine" evidence="1">
    <location>
        <position position="151"/>
    </location>
</feature>
<accession>Q1QN30</accession>
<sequence>MRSGVIAQKVGMTRVFTDAGEHIPVTVLRLSNCQVLGHRTSEKNGYVALQLGSGARKTVYLPKAERGQFAVAKVEPKRKVAEFRVSEDSLIPVGAEIQADHFVVGQFVDVTGTSVGKGFAGGMKRWNFGGLRATHGVSVSHRSIGSTGGRQDPGKTFKNKKMPGHMGVDRVTTLNLRVVQTDVERGLILVEGAVPGSKGGWIAVRDAVKKPLPKDAPKPGKFKVAGDDKVTADAPTEKEGA</sequence>
<evidence type="ECO:0000255" key="1">
    <source>
        <dbReference type="HAMAP-Rule" id="MF_01325"/>
    </source>
</evidence>
<evidence type="ECO:0000256" key="2">
    <source>
        <dbReference type="SAM" id="MobiDB-lite"/>
    </source>
</evidence>
<evidence type="ECO:0000305" key="3"/>
<protein>
    <recommendedName>
        <fullName evidence="1">Large ribosomal subunit protein uL3</fullName>
    </recommendedName>
    <alternativeName>
        <fullName evidence="3">50S ribosomal protein L3</fullName>
    </alternativeName>
</protein>
<comment type="function">
    <text evidence="1">One of the primary rRNA binding proteins, it binds directly near the 3'-end of the 23S rRNA, where it nucleates assembly of the 50S subunit.</text>
</comment>
<comment type="subunit">
    <text evidence="1">Part of the 50S ribosomal subunit. Forms a cluster with proteins L14 and L19.</text>
</comment>
<comment type="PTM">
    <text evidence="1">Methylated by PrmB.</text>
</comment>
<comment type="similarity">
    <text evidence="1">Belongs to the universal ribosomal protein uL3 family.</text>
</comment>
<reference key="1">
    <citation type="submission" date="2006-03" db="EMBL/GenBank/DDBJ databases">
        <title>Complete sequence of chromosome of Nitrobacter hamburgensis X14.</title>
        <authorList>
            <consortium name="US DOE Joint Genome Institute"/>
            <person name="Copeland A."/>
            <person name="Lucas S."/>
            <person name="Lapidus A."/>
            <person name="Barry K."/>
            <person name="Detter J.C."/>
            <person name="Glavina del Rio T."/>
            <person name="Hammon N."/>
            <person name="Israni S."/>
            <person name="Dalin E."/>
            <person name="Tice H."/>
            <person name="Pitluck S."/>
            <person name="Chain P."/>
            <person name="Malfatti S."/>
            <person name="Shin M."/>
            <person name="Vergez L."/>
            <person name="Schmutz J."/>
            <person name="Larimer F."/>
            <person name="Land M."/>
            <person name="Hauser L."/>
            <person name="Kyrpides N."/>
            <person name="Ivanova N."/>
            <person name="Ward B."/>
            <person name="Arp D."/>
            <person name="Klotz M."/>
            <person name="Stein L."/>
            <person name="O'Mullan G."/>
            <person name="Starkenburg S."/>
            <person name="Sayavedra L."/>
            <person name="Poret-Peterson A.T."/>
            <person name="Gentry M.E."/>
            <person name="Bruce D."/>
            <person name="Richardson P."/>
        </authorList>
    </citation>
    <scope>NUCLEOTIDE SEQUENCE [LARGE SCALE GENOMIC DNA]</scope>
    <source>
        <strain>DSM 10229 / NCIMB 13809 / X14</strain>
    </source>
</reference>
<organism>
    <name type="scientific">Nitrobacter hamburgensis (strain DSM 10229 / NCIMB 13809 / X14)</name>
    <dbReference type="NCBI Taxonomy" id="323097"/>
    <lineage>
        <taxon>Bacteria</taxon>
        <taxon>Pseudomonadati</taxon>
        <taxon>Pseudomonadota</taxon>
        <taxon>Alphaproteobacteria</taxon>
        <taxon>Hyphomicrobiales</taxon>
        <taxon>Nitrobacteraceae</taxon>
        <taxon>Nitrobacter</taxon>
    </lineage>
</organism>
<dbReference type="EMBL" id="CP000319">
    <property type="protein sequence ID" value="ABE62367.1"/>
    <property type="molecule type" value="Genomic_DNA"/>
</dbReference>
<dbReference type="RefSeq" id="WP_011510054.1">
    <property type="nucleotide sequence ID" value="NC_007964.1"/>
</dbReference>
<dbReference type="SMR" id="Q1QN30"/>
<dbReference type="STRING" id="323097.Nham_1545"/>
<dbReference type="KEGG" id="nha:Nham_1545"/>
<dbReference type="eggNOG" id="COG0087">
    <property type="taxonomic scope" value="Bacteria"/>
</dbReference>
<dbReference type="HOGENOM" id="CLU_044142_2_0_5"/>
<dbReference type="OrthoDB" id="9806135at2"/>
<dbReference type="Proteomes" id="UP000001953">
    <property type="component" value="Chromosome"/>
</dbReference>
<dbReference type="GO" id="GO:0022625">
    <property type="term" value="C:cytosolic large ribosomal subunit"/>
    <property type="evidence" value="ECO:0007669"/>
    <property type="project" value="TreeGrafter"/>
</dbReference>
<dbReference type="GO" id="GO:0019843">
    <property type="term" value="F:rRNA binding"/>
    <property type="evidence" value="ECO:0007669"/>
    <property type="project" value="UniProtKB-UniRule"/>
</dbReference>
<dbReference type="GO" id="GO:0003735">
    <property type="term" value="F:structural constituent of ribosome"/>
    <property type="evidence" value="ECO:0007669"/>
    <property type="project" value="InterPro"/>
</dbReference>
<dbReference type="GO" id="GO:0006412">
    <property type="term" value="P:translation"/>
    <property type="evidence" value="ECO:0007669"/>
    <property type="project" value="UniProtKB-UniRule"/>
</dbReference>
<dbReference type="FunFam" id="2.40.30.10:FF:000004">
    <property type="entry name" value="50S ribosomal protein L3"/>
    <property type="match status" value="1"/>
</dbReference>
<dbReference type="FunFam" id="3.30.160.810:FF:000001">
    <property type="entry name" value="50S ribosomal protein L3"/>
    <property type="match status" value="1"/>
</dbReference>
<dbReference type="Gene3D" id="3.30.160.810">
    <property type="match status" value="1"/>
</dbReference>
<dbReference type="Gene3D" id="2.40.30.10">
    <property type="entry name" value="Translation factors"/>
    <property type="match status" value="1"/>
</dbReference>
<dbReference type="HAMAP" id="MF_01325_B">
    <property type="entry name" value="Ribosomal_uL3_B"/>
    <property type="match status" value="1"/>
</dbReference>
<dbReference type="InterPro" id="IPR000597">
    <property type="entry name" value="Ribosomal_uL3"/>
</dbReference>
<dbReference type="InterPro" id="IPR019927">
    <property type="entry name" value="Ribosomal_uL3_bac/org-type"/>
</dbReference>
<dbReference type="InterPro" id="IPR019926">
    <property type="entry name" value="Ribosomal_uL3_CS"/>
</dbReference>
<dbReference type="InterPro" id="IPR009000">
    <property type="entry name" value="Transl_B-barrel_sf"/>
</dbReference>
<dbReference type="NCBIfam" id="TIGR03625">
    <property type="entry name" value="L3_bact"/>
    <property type="match status" value="1"/>
</dbReference>
<dbReference type="PANTHER" id="PTHR11229">
    <property type="entry name" value="50S RIBOSOMAL PROTEIN L3"/>
    <property type="match status" value="1"/>
</dbReference>
<dbReference type="PANTHER" id="PTHR11229:SF16">
    <property type="entry name" value="LARGE RIBOSOMAL SUBUNIT PROTEIN UL3C"/>
    <property type="match status" value="1"/>
</dbReference>
<dbReference type="Pfam" id="PF00297">
    <property type="entry name" value="Ribosomal_L3"/>
    <property type="match status" value="1"/>
</dbReference>
<dbReference type="SUPFAM" id="SSF50447">
    <property type="entry name" value="Translation proteins"/>
    <property type="match status" value="1"/>
</dbReference>
<dbReference type="PROSITE" id="PS00474">
    <property type="entry name" value="RIBOSOMAL_L3"/>
    <property type="match status" value="1"/>
</dbReference>
<keyword id="KW-0488">Methylation</keyword>
<keyword id="KW-1185">Reference proteome</keyword>
<keyword id="KW-0687">Ribonucleoprotein</keyword>
<keyword id="KW-0689">Ribosomal protein</keyword>
<keyword id="KW-0694">RNA-binding</keyword>
<keyword id="KW-0699">rRNA-binding</keyword>
<proteinExistence type="inferred from homology"/>
<name>RL3_NITHX</name>
<gene>
    <name evidence="1" type="primary">rplC</name>
    <name type="ordered locus">Nham_1545</name>
</gene>